<evidence type="ECO:0000255" key="1">
    <source>
        <dbReference type="HAMAP-Rule" id="MF_00500"/>
    </source>
</evidence>
<evidence type="ECO:0000256" key="2">
    <source>
        <dbReference type="SAM" id="MobiDB-lite"/>
    </source>
</evidence>
<evidence type="ECO:0000305" key="3"/>
<dbReference type="EMBL" id="CP000814">
    <property type="protein sequence ID" value="ABV53109.1"/>
    <property type="molecule type" value="Genomic_DNA"/>
</dbReference>
<dbReference type="RefSeq" id="WP_002856547.1">
    <property type="nucleotide sequence ID" value="NC_009839.1"/>
</dbReference>
<dbReference type="SMR" id="A8FNS2"/>
<dbReference type="KEGG" id="cju:C8J_1512"/>
<dbReference type="HOGENOM" id="CLU_160655_3_0_7"/>
<dbReference type="GO" id="GO:0005829">
    <property type="term" value="C:cytosol"/>
    <property type="evidence" value="ECO:0007669"/>
    <property type="project" value="TreeGrafter"/>
</dbReference>
<dbReference type="GO" id="GO:0015935">
    <property type="term" value="C:small ribosomal subunit"/>
    <property type="evidence" value="ECO:0007669"/>
    <property type="project" value="TreeGrafter"/>
</dbReference>
<dbReference type="GO" id="GO:0070181">
    <property type="term" value="F:small ribosomal subunit rRNA binding"/>
    <property type="evidence" value="ECO:0007669"/>
    <property type="project" value="TreeGrafter"/>
</dbReference>
<dbReference type="GO" id="GO:0003735">
    <property type="term" value="F:structural constituent of ribosome"/>
    <property type="evidence" value="ECO:0007669"/>
    <property type="project" value="InterPro"/>
</dbReference>
<dbReference type="GO" id="GO:0006412">
    <property type="term" value="P:translation"/>
    <property type="evidence" value="ECO:0007669"/>
    <property type="project" value="UniProtKB-UniRule"/>
</dbReference>
<dbReference type="FunFam" id="1.20.58.110:FF:000001">
    <property type="entry name" value="30S ribosomal protein S20"/>
    <property type="match status" value="1"/>
</dbReference>
<dbReference type="Gene3D" id="1.20.58.110">
    <property type="entry name" value="Ribosomal protein S20"/>
    <property type="match status" value="1"/>
</dbReference>
<dbReference type="HAMAP" id="MF_00500">
    <property type="entry name" value="Ribosomal_bS20"/>
    <property type="match status" value="1"/>
</dbReference>
<dbReference type="InterPro" id="IPR002583">
    <property type="entry name" value="Ribosomal_bS20"/>
</dbReference>
<dbReference type="InterPro" id="IPR036510">
    <property type="entry name" value="Ribosomal_bS20_sf"/>
</dbReference>
<dbReference type="NCBIfam" id="TIGR00029">
    <property type="entry name" value="S20"/>
    <property type="match status" value="1"/>
</dbReference>
<dbReference type="PANTHER" id="PTHR33398">
    <property type="entry name" value="30S RIBOSOMAL PROTEIN S20"/>
    <property type="match status" value="1"/>
</dbReference>
<dbReference type="PANTHER" id="PTHR33398:SF1">
    <property type="entry name" value="SMALL RIBOSOMAL SUBUNIT PROTEIN BS20C"/>
    <property type="match status" value="1"/>
</dbReference>
<dbReference type="Pfam" id="PF01649">
    <property type="entry name" value="Ribosomal_S20p"/>
    <property type="match status" value="1"/>
</dbReference>
<dbReference type="SUPFAM" id="SSF46992">
    <property type="entry name" value="Ribosomal protein S20"/>
    <property type="match status" value="1"/>
</dbReference>
<protein>
    <recommendedName>
        <fullName evidence="1">Small ribosomal subunit protein bS20</fullName>
    </recommendedName>
    <alternativeName>
        <fullName evidence="3">30S ribosomal protein S20</fullName>
    </alternativeName>
</protein>
<gene>
    <name evidence="1" type="primary">rpsT</name>
    <name type="ordered locus">C8J_1512</name>
</gene>
<accession>A8FNS2</accession>
<proteinExistence type="inferred from homology"/>
<feature type="chain" id="PRO_1000072435" description="Small ribosomal subunit protein bS20">
    <location>
        <begin position="1"/>
        <end position="87"/>
    </location>
</feature>
<feature type="region of interest" description="Disordered" evidence="2">
    <location>
        <begin position="1"/>
        <end position="21"/>
    </location>
</feature>
<organism>
    <name type="scientific">Campylobacter jejuni subsp. jejuni serotype O:6 (strain 81116 / NCTC 11828)</name>
    <dbReference type="NCBI Taxonomy" id="407148"/>
    <lineage>
        <taxon>Bacteria</taxon>
        <taxon>Pseudomonadati</taxon>
        <taxon>Campylobacterota</taxon>
        <taxon>Epsilonproteobacteria</taxon>
        <taxon>Campylobacterales</taxon>
        <taxon>Campylobacteraceae</taxon>
        <taxon>Campylobacter</taxon>
    </lineage>
</organism>
<name>RS20_CAMJ8</name>
<sequence>MANHKSAEKRARQTIKKTERNRFYRTRLKNITKAVREAAANGDKNAANEALKVANKSIHAMVSRGFIKKQTASRRVSRLALLVNKIA</sequence>
<comment type="function">
    <text evidence="1">Binds directly to 16S ribosomal RNA.</text>
</comment>
<comment type="similarity">
    <text evidence="1">Belongs to the bacterial ribosomal protein bS20 family.</text>
</comment>
<reference key="1">
    <citation type="journal article" date="2007" name="J. Bacteriol.">
        <title>The complete genome sequence of Campylobacter jejuni strain 81116 (NCTC11828).</title>
        <authorList>
            <person name="Pearson B.M."/>
            <person name="Gaskin D.J.H."/>
            <person name="Segers R.P.A.M."/>
            <person name="Wells J.M."/>
            <person name="Nuijten P.J.M."/>
            <person name="van Vliet A.H.M."/>
        </authorList>
    </citation>
    <scope>NUCLEOTIDE SEQUENCE [LARGE SCALE GENOMIC DNA]</scope>
    <source>
        <strain>81116 / NCTC 11828</strain>
    </source>
</reference>
<keyword id="KW-0687">Ribonucleoprotein</keyword>
<keyword id="KW-0689">Ribosomal protein</keyword>
<keyword id="KW-0694">RNA-binding</keyword>
<keyword id="KW-0699">rRNA-binding</keyword>